<keyword id="KW-0010">Activator</keyword>
<keyword id="KW-0963">Cytoplasm</keyword>
<keyword id="KW-0238">DNA-binding</keyword>
<keyword id="KW-0677">Repeat</keyword>
<keyword id="KW-0684">Rhamnose metabolism</keyword>
<keyword id="KW-0804">Transcription</keyword>
<keyword id="KW-0805">Transcription regulation</keyword>
<sequence>MTVLHSVDFFPSGKAPVAIEPRLPQAAFPEHHHDFHEIVIVEHGTGIHVFNGQPYTISGGTVCFVRDHDRHLYEHTDNLCLTNVLWRSPDAFQFLAGLDQLLPQEQDGYYPSHWRVNQSVLQQVRQLVGLMERAGDSMDAPAVANREILFMQLLVLLRRSSLMEGATNNDAKLNQLMAWLEEHFAEEVCWEAVAEQFSLSLRTLHRQLKQHTGLTPQRYLNRLRLIKARHLLRHSDHSVTEIAYRCGFGDSNHFSTLFRREFNWSPRDIRQGRDAIIQ</sequence>
<organism>
    <name type="scientific">Salmonella schwarzengrund (strain CVM19633)</name>
    <dbReference type="NCBI Taxonomy" id="439843"/>
    <lineage>
        <taxon>Bacteria</taxon>
        <taxon>Pseudomonadati</taxon>
        <taxon>Pseudomonadota</taxon>
        <taxon>Gammaproteobacteria</taxon>
        <taxon>Enterobacterales</taxon>
        <taxon>Enterobacteriaceae</taxon>
        <taxon>Salmonella</taxon>
    </lineage>
</organism>
<dbReference type="EMBL" id="CP001127">
    <property type="protein sequence ID" value="ACF91573.1"/>
    <property type="molecule type" value="Genomic_DNA"/>
</dbReference>
<dbReference type="RefSeq" id="WP_000217116.1">
    <property type="nucleotide sequence ID" value="NC_011094.1"/>
</dbReference>
<dbReference type="SMR" id="B4TPQ9"/>
<dbReference type="KEGG" id="sew:SeSA_A4262"/>
<dbReference type="HOGENOM" id="CLU_000445_88_5_6"/>
<dbReference type="Proteomes" id="UP000001865">
    <property type="component" value="Chromosome"/>
</dbReference>
<dbReference type="GO" id="GO:0005737">
    <property type="term" value="C:cytoplasm"/>
    <property type="evidence" value="ECO:0007669"/>
    <property type="project" value="UniProtKB-SubCell"/>
</dbReference>
<dbReference type="GO" id="GO:0003700">
    <property type="term" value="F:DNA-binding transcription factor activity"/>
    <property type="evidence" value="ECO:0007669"/>
    <property type="project" value="UniProtKB-UniRule"/>
</dbReference>
<dbReference type="GO" id="GO:0043565">
    <property type="term" value="F:sequence-specific DNA binding"/>
    <property type="evidence" value="ECO:0007669"/>
    <property type="project" value="InterPro"/>
</dbReference>
<dbReference type="GO" id="GO:0045893">
    <property type="term" value="P:positive regulation of DNA-templated transcription"/>
    <property type="evidence" value="ECO:0007669"/>
    <property type="project" value="UniProtKB-UniRule"/>
</dbReference>
<dbReference type="GO" id="GO:0019299">
    <property type="term" value="P:rhamnose metabolic process"/>
    <property type="evidence" value="ECO:0007669"/>
    <property type="project" value="UniProtKB-UniRule"/>
</dbReference>
<dbReference type="CDD" id="cd06977">
    <property type="entry name" value="cupin_RhaR_RhaS-like_N"/>
    <property type="match status" value="1"/>
</dbReference>
<dbReference type="Gene3D" id="1.10.10.60">
    <property type="entry name" value="Homeodomain-like"/>
    <property type="match status" value="1"/>
</dbReference>
<dbReference type="Gene3D" id="2.60.120.10">
    <property type="entry name" value="Jelly Rolls"/>
    <property type="match status" value="1"/>
</dbReference>
<dbReference type="HAMAP" id="MF_01534">
    <property type="entry name" value="HTH_type_RhaS"/>
    <property type="match status" value="1"/>
</dbReference>
<dbReference type="InterPro" id="IPR003313">
    <property type="entry name" value="AraC-bd"/>
</dbReference>
<dbReference type="InterPro" id="IPR050204">
    <property type="entry name" value="AraC_XylS_family_regulators"/>
</dbReference>
<dbReference type="InterPro" id="IPR009057">
    <property type="entry name" value="Homeodomain-like_sf"/>
</dbReference>
<dbReference type="InterPro" id="IPR037923">
    <property type="entry name" value="HTH-like"/>
</dbReference>
<dbReference type="InterPro" id="IPR018060">
    <property type="entry name" value="HTH_AraC"/>
</dbReference>
<dbReference type="InterPro" id="IPR018062">
    <property type="entry name" value="HTH_AraC-typ_CS"/>
</dbReference>
<dbReference type="InterPro" id="IPR047220">
    <property type="entry name" value="RhaR_RhaS-like_N"/>
</dbReference>
<dbReference type="InterPro" id="IPR014710">
    <property type="entry name" value="RmlC-like_jellyroll"/>
</dbReference>
<dbReference type="InterPro" id="IPR020449">
    <property type="entry name" value="Tscrpt_reg_AraC-type_HTH"/>
</dbReference>
<dbReference type="InterPro" id="IPR023609">
    <property type="entry name" value="Tscrpt_reg_HTH_RhaS"/>
</dbReference>
<dbReference type="NCBIfam" id="NF010028">
    <property type="entry name" value="PRK13503.1"/>
    <property type="match status" value="1"/>
</dbReference>
<dbReference type="PANTHER" id="PTHR46796:SF13">
    <property type="entry name" value="HTH-TYPE TRANSCRIPTIONAL ACTIVATOR RHAS"/>
    <property type="match status" value="1"/>
</dbReference>
<dbReference type="PANTHER" id="PTHR46796">
    <property type="entry name" value="HTH-TYPE TRANSCRIPTIONAL ACTIVATOR RHAS-RELATED"/>
    <property type="match status" value="1"/>
</dbReference>
<dbReference type="Pfam" id="PF02311">
    <property type="entry name" value="AraC_binding"/>
    <property type="match status" value="1"/>
</dbReference>
<dbReference type="Pfam" id="PF12833">
    <property type="entry name" value="HTH_18"/>
    <property type="match status" value="1"/>
</dbReference>
<dbReference type="PRINTS" id="PR00032">
    <property type="entry name" value="HTHARAC"/>
</dbReference>
<dbReference type="SMART" id="SM00342">
    <property type="entry name" value="HTH_ARAC"/>
    <property type="match status" value="1"/>
</dbReference>
<dbReference type="SUPFAM" id="SSF46689">
    <property type="entry name" value="Homeodomain-like"/>
    <property type="match status" value="2"/>
</dbReference>
<dbReference type="SUPFAM" id="SSF51215">
    <property type="entry name" value="Regulatory protein AraC"/>
    <property type="match status" value="1"/>
</dbReference>
<dbReference type="PROSITE" id="PS00041">
    <property type="entry name" value="HTH_ARAC_FAMILY_1"/>
    <property type="match status" value="1"/>
</dbReference>
<dbReference type="PROSITE" id="PS01124">
    <property type="entry name" value="HTH_ARAC_FAMILY_2"/>
    <property type="match status" value="1"/>
</dbReference>
<reference key="1">
    <citation type="journal article" date="2011" name="J. Bacteriol.">
        <title>Comparative genomics of 28 Salmonella enterica isolates: evidence for CRISPR-mediated adaptive sublineage evolution.</title>
        <authorList>
            <person name="Fricke W.F."/>
            <person name="Mammel M.K."/>
            <person name="McDermott P.F."/>
            <person name="Tartera C."/>
            <person name="White D.G."/>
            <person name="Leclerc J.E."/>
            <person name="Ravel J."/>
            <person name="Cebula T.A."/>
        </authorList>
    </citation>
    <scope>NUCLEOTIDE SEQUENCE [LARGE SCALE GENOMIC DNA]</scope>
    <source>
        <strain>CVM19633</strain>
    </source>
</reference>
<name>RHAS_SALSV</name>
<proteinExistence type="inferred from homology"/>
<protein>
    <recommendedName>
        <fullName evidence="1">HTH-type transcriptional activator RhaS</fullName>
    </recommendedName>
    <alternativeName>
        <fullName evidence="1">L-rhamnose operon regulatory protein RhaS</fullName>
    </alternativeName>
</protein>
<evidence type="ECO:0000255" key="1">
    <source>
        <dbReference type="HAMAP-Rule" id="MF_01534"/>
    </source>
</evidence>
<accession>B4TPQ9</accession>
<gene>
    <name evidence="1" type="primary">rhaS</name>
    <name type="ordered locus">SeSA_A4262</name>
</gene>
<comment type="function">
    <text evidence="1">Activates expression of the rhaBAD and rhaT operons.</text>
</comment>
<comment type="subunit">
    <text evidence="1">Binds DNA as a dimer.</text>
</comment>
<comment type="subcellular location">
    <subcellularLocation>
        <location evidence="1">Cytoplasm</location>
    </subcellularLocation>
</comment>
<feature type="chain" id="PRO_1000200965" description="HTH-type transcriptional activator RhaS">
    <location>
        <begin position="1"/>
        <end position="278"/>
    </location>
</feature>
<feature type="domain" description="HTH araC/xylS-type" evidence="1">
    <location>
        <begin position="174"/>
        <end position="272"/>
    </location>
</feature>
<feature type="DNA-binding region" description="H-T-H motif" evidence="1">
    <location>
        <begin position="191"/>
        <end position="212"/>
    </location>
</feature>
<feature type="DNA-binding region" description="H-T-H motif" evidence="1">
    <location>
        <begin position="239"/>
        <end position="262"/>
    </location>
</feature>
<feature type="site" description="Interaction with sigma-70" evidence="1">
    <location>
        <position position="241"/>
    </location>
</feature>
<feature type="site" description="Interaction with sigma-70" evidence="1">
    <location>
        <position position="250"/>
    </location>
</feature>